<organism>
    <name type="scientific">Enterobacteria phage S13</name>
    <name type="common">Bacteriophage S13</name>
    <dbReference type="NCBI Taxonomy" id="10844"/>
    <lineage>
        <taxon>Viruses</taxon>
        <taxon>Monodnaviria</taxon>
        <taxon>Sangervirae</taxon>
        <taxon>Phixviricota</taxon>
        <taxon>Malgrandaviricetes</taxon>
        <taxon>Petitvirales</taxon>
        <taxon>Microviridae</taxon>
        <taxon>Bullavirinae</taxon>
        <taxon>Sinsheimervirus</taxon>
        <taxon>Escherichia phage phiX174</taxon>
        <taxon>Escherichia phage phiX174</taxon>
    </lineage>
</organism>
<dbReference type="EMBL" id="M14428">
    <property type="protein sequence ID" value="AAA32588.1"/>
    <property type="molecule type" value="Genomic_DNA"/>
</dbReference>
<dbReference type="PIR" id="JS0455">
    <property type="entry name" value="JS0455"/>
</dbReference>
<dbReference type="SMR" id="P07930"/>
<dbReference type="Proteomes" id="UP000002129">
    <property type="component" value="Segment"/>
</dbReference>
<dbReference type="GO" id="GO:0020002">
    <property type="term" value="C:host cell plasma membrane"/>
    <property type="evidence" value="ECO:0007669"/>
    <property type="project" value="UniProtKB-SubCell"/>
</dbReference>
<dbReference type="GO" id="GO:0016020">
    <property type="term" value="C:membrane"/>
    <property type="evidence" value="ECO:0007669"/>
    <property type="project" value="UniProtKB-KW"/>
</dbReference>
<dbReference type="GO" id="GO:0004857">
    <property type="term" value="F:enzyme inhibitor activity"/>
    <property type="evidence" value="ECO:0007669"/>
    <property type="project" value="InterPro"/>
</dbReference>
<dbReference type="GO" id="GO:0031640">
    <property type="term" value="P:killing of cells of another organism"/>
    <property type="evidence" value="ECO:0007669"/>
    <property type="project" value="UniProtKB-KW"/>
</dbReference>
<dbReference type="InterPro" id="IPR007605">
    <property type="entry name" value="Micrvir_lysisE"/>
</dbReference>
<dbReference type="Pfam" id="PF04517">
    <property type="entry name" value="Microvir_lysis"/>
    <property type="match status" value="1"/>
</dbReference>
<protein>
    <recommendedName>
        <fullName>Lysis protein</fullName>
        <shortName>E protein</shortName>
    </recommendedName>
    <alternativeName>
        <fullName>GPE</fullName>
    </alternativeName>
</protein>
<organismHost>
    <name type="scientific">Salmonella</name>
    <dbReference type="NCBI Taxonomy" id="590"/>
</organismHost>
<name>LYS_BPS13</name>
<gene>
    <name type="primary">E</name>
</gene>
<keyword id="KW-0204">Cytolysis</keyword>
<keyword id="KW-0578">Host cell lysis by virus</keyword>
<keyword id="KW-1032">Host cell membrane</keyword>
<keyword id="KW-1043">Host membrane</keyword>
<keyword id="KW-0472">Membrane</keyword>
<keyword id="KW-1185">Reference proteome</keyword>
<keyword id="KW-0812">Transmembrane</keyword>
<keyword id="KW-1133">Transmembrane helix</keyword>
<keyword id="KW-1188">Viral release from host cell</keyword>
<proteinExistence type="inferred from homology"/>
<evidence type="ECO:0000250" key="1">
    <source>
        <dbReference type="UniProtKB" id="P03639"/>
    </source>
</evidence>
<evidence type="ECO:0000255" key="2"/>
<evidence type="ECO:0000305" key="3"/>
<sequence length="91" mass="10574">MVRWTLWDTLAFLLLLSLLLPSLLIMFIPSTFKRPVSSWKALNLRKTLLMASSVRLKPLNCSRLPCVYAQETLTFLLTQKKTCVKNYVQKE</sequence>
<accession>P07930</accession>
<feature type="chain" id="PRO_0000164886" description="Lysis protein">
    <location>
        <begin position="1"/>
        <end position="91"/>
    </location>
</feature>
<feature type="topological domain" description="Periplasmic" evidence="3">
    <location>
        <begin position="1"/>
        <end position="8"/>
    </location>
</feature>
<feature type="transmembrane region" description="Helical" evidence="2">
    <location>
        <begin position="9"/>
        <end position="29"/>
    </location>
</feature>
<feature type="topological domain" description="Cytoplasmic" evidence="3">
    <location>
        <begin position="30"/>
        <end position="91"/>
    </location>
</feature>
<reference key="1">
    <citation type="journal article" date="1985" name="Gene">
        <title>Nucleotide sequence and genome organization of bacteriophage S13 DNA.</title>
        <authorList>
            <person name="Lau P.C.K."/>
            <person name="Spencer J.H."/>
        </authorList>
    </citation>
    <scope>NUCLEOTIDE SEQUENCE [GENOMIC DNA]</scope>
</reference>
<comment type="function">
    <text evidence="1">Induces host cell lysis. Inhibits the host translocase MraY activity that catalyzes the synthesis of lipid I, a necessary step for the host cell wall biosynthesis.</text>
</comment>
<comment type="subunit">
    <text evidence="1">Oligomerizes. Interacts (via N-terminal) with host SlyD; this interaction protects E from proteolysis and stabilizes the YES complex. Interacts with host MraY; this interaction inhibits MraY by blocking lipid access to the active site. Part of the YES complex composed of 2 host Mray molecules, 2 lysis protein E molecules and 2 host SlyD molecules.</text>
</comment>
<comment type="subcellular location">
    <subcellularLocation>
        <location evidence="2">Host cell membrane</location>
        <topology evidence="2">Single-pass type I membrane protein</topology>
    </subcellularLocation>
</comment>
<comment type="similarity">
    <text evidence="3">Belongs to the microvirus E protein family.</text>
</comment>